<name>FLOA_STAA9</name>
<keyword id="KW-1003">Cell membrane</keyword>
<keyword id="KW-0472">Membrane</keyword>
<keyword id="KW-0812">Transmembrane</keyword>
<keyword id="KW-1133">Transmembrane helix</keyword>
<proteinExistence type="inferred from homology"/>
<sequence>MFSLSFIVIAVIIIVALLILFSFVPIGLWISALAAGVHVGIGTLVGMRLRRVSPRKVIAPLIKAHKAGLALTTNQLESHYLAGGNVDRVVDANIAAQRADIDLPFERAAAIDLAGRDVLEAVQMSVNPKVIETPFIAGVAMNGIEVKAKARITVRANIARLVGGAGEETIIARVGEGIVSTIGSSKHHTEVLENPDNISKTVLSKGLDSGTAFEILSIDIADVDISKNIGADLQTEQALADKNIAQAKAEERRAMAVATEQEMKARVQEMHAKVVEAESEVPLAMAEALRSGNISVKDYYNLKNIEADTGMRNAINKRTDQSDDESPEH</sequence>
<evidence type="ECO:0000255" key="1">
    <source>
        <dbReference type="HAMAP-Rule" id="MF_01562"/>
    </source>
</evidence>
<protein>
    <recommendedName>
        <fullName evidence="1">Flotillin-like protein FloA</fullName>
    </recommendedName>
</protein>
<feature type="chain" id="PRO_1000087813" description="Flotillin-like protein FloA">
    <location>
        <begin position="1"/>
        <end position="329"/>
    </location>
</feature>
<feature type="transmembrane region" description="Helical" evidence="1">
    <location>
        <begin position="6"/>
        <end position="26"/>
    </location>
</feature>
<feature type="transmembrane region" description="Helical" evidence="1">
    <location>
        <begin position="27"/>
        <end position="47"/>
    </location>
</feature>
<reference key="1">
    <citation type="submission" date="2007-05" db="EMBL/GenBank/DDBJ databases">
        <title>Complete sequence of chromosome of Staphylococcus aureus subsp. aureus JH9.</title>
        <authorList>
            <consortium name="US DOE Joint Genome Institute"/>
            <person name="Copeland A."/>
            <person name="Lucas S."/>
            <person name="Lapidus A."/>
            <person name="Barry K."/>
            <person name="Detter J.C."/>
            <person name="Glavina del Rio T."/>
            <person name="Hammon N."/>
            <person name="Israni S."/>
            <person name="Pitluck S."/>
            <person name="Chain P."/>
            <person name="Malfatti S."/>
            <person name="Shin M."/>
            <person name="Vergez L."/>
            <person name="Schmutz J."/>
            <person name="Larimer F."/>
            <person name="Land M."/>
            <person name="Hauser L."/>
            <person name="Kyrpides N."/>
            <person name="Kim E."/>
            <person name="Tomasz A."/>
            <person name="Richardson P."/>
        </authorList>
    </citation>
    <scope>NUCLEOTIDE SEQUENCE [LARGE SCALE GENOMIC DNA]</scope>
    <source>
        <strain>JH9</strain>
    </source>
</reference>
<accession>A5ITA1</accession>
<gene>
    <name evidence="1" type="primary">floA</name>
    <name type="ordered locus">SaurJH9_1631</name>
</gene>
<dbReference type="EMBL" id="CP000703">
    <property type="protein sequence ID" value="ABQ49424.1"/>
    <property type="molecule type" value="Genomic_DNA"/>
</dbReference>
<dbReference type="RefSeq" id="WP_000492108.1">
    <property type="nucleotide sequence ID" value="NC_009487.1"/>
</dbReference>
<dbReference type="SMR" id="A5ITA1"/>
<dbReference type="KEGG" id="saj:SaurJH9_1631"/>
<dbReference type="HOGENOM" id="CLU_836378_0_0_9"/>
<dbReference type="GO" id="GO:0045121">
    <property type="term" value="C:membrane raft"/>
    <property type="evidence" value="ECO:0007669"/>
    <property type="project" value="UniProtKB-SubCell"/>
</dbReference>
<dbReference type="GO" id="GO:0005886">
    <property type="term" value="C:plasma membrane"/>
    <property type="evidence" value="ECO:0007669"/>
    <property type="project" value="UniProtKB-SubCell"/>
</dbReference>
<dbReference type="HAMAP" id="MF_01562">
    <property type="entry name" value="FloA"/>
    <property type="match status" value="1"/>
</dbReference>
<dbReference type="InterPro" id="IPR022853">
    <property type="entry name" value="FloA"/>
</dbReference>
<dbReference type="NCBIfam" id="NF010186">
    <property type="entry name" value="PRK13665.1"/>
    <property type="match status" value="1"/>
</dbReference>
<dbReference type="Pfam" id="PF12127">
    <property type="entry name" value="FloA"/>
    <property type="match status" value="1"/>
</dbReference>
<organism>
    <name type="scientific">Staphylococcus aureus (strain JH9)</name>
    <dbReference type="NCBI Taxonomy" id="359786"/>
    <lineage>
        <taxon>Bacteria</taxon>
        <taxon>Bacillati</taxon>
        <taxon>Bacillota</taxon>
        <taxon>Bacilli</taxon>
        <taxon>Bacillales</taxon>
        <taxon>Staphylococcaceae</taxon>
        <taxon>Staphylococcus</taxon>
    </lineage>
</organism>
<comment type="function">
    <text evidence="1">Found in functional membrane microdomains (FMM) that may be equivalent to eukaryotic membrane rafts. FMMs are highly dynamic and increase in number as cells age. Flotillins are thought to be important factors in membrane fluidity.</text>
</comment>
<comment type="subunit">
    <text evidence="1">Homooligomerizes.</text>
</comment>
<comment type="subcellular location">
    <subcellularLocation>
        <location evidence="1">Cell membrane</location>
        <topology evidence="1">Multi-pass membrane protein</topology>
    </subcellularLocation>
    <subcellularLocation>
        <location evidence="1">Membrane raft</location>
        <topology evidence="1">Multi-pass membrane protein</topology>
    </subcellularLocation>
</comment>
<comment type="similarity">
    <text evidence="1">Belongs to the flotillin-like FloA family.</text>
</comment>